<feature type="chain" id="PRO_0000324857" description="Fe-S cluster assembly protein dre2">
    <location>
        <begin position="1"/>
        <end position="313"/>
    </location>
</feature>
<feature type="region of interest" description="Disordered" evidence="2">
    <location>
        <begin position="1"/>
        <end position="25"/>
    </location>
</feature>
<feature type="region of interest" description="N-terminal SAM-like domain" evidence="1">
    <location>
        <begin position="20"/>
        <end position="145"/>
    </location>
</feature>
<feature type="region of interest" description="Linker" evidence="1">
    <location>
        <begin position="146"/>
        <end position="203"/>
    </location>
</feature>
<feature type="region of interest" description="Disordered" evidence="2">
    <location>
        <begin position="151"/>
        <end position="187"/>
    </location>
</feature>
<feature type="region of interest" description="Fe-S binding site A" evidence="1">
    <location>
        <begin position="213"/>
        <end position="230"/>
    </location>
</feature>
<feature type="region of interest" description="Fe-S binding site B" evidence="1">
    <location>
        <begin position="276"/>
        <end position="290"/>
    </location>
</feature>
<feature type="short sequence motif" description="Cx2C motif 1" evidence="1">
    <location>
        <begin position="276"/>
        <end position="279"/>
    </location>
</feature>
<feature type="short sequence motif" description="Cx2C motif 2" evidence="1">
    <location>
        <begin position="287"/>
        <end position="290"/>
    </location>
</feature>
<feature type="compositionally biased region" description="Polar residues" evidence="2">
    <location>
        <begin position="159"/>
        <end position="177"/>
    </location>
</feature>
<feature type="binding site" evidence="1">
    <location>
        <position position="213"/>
    </location>
    <ligand>
        <name>[2Fe-2S] cluster</name>
        <dbReference type="ChEBI" id="CHEBI:190135"/>
    </ligand>
</feature>
<feature type="binding site" evidence="1">
    <location>
        <position position="225"/>
    </location>
    <ligand>
        <name>[2Fe-2S] cluster</name>
        <dbReference type="ChEBI" id="CHEBI:190135"/>
    </ligand>
</feature>
<feature type="binding site" evidence="1">
    <location>
        <position position="228"/>
    </location>
    <ligand>
        <name>[2Fe-2S] cluster</name>
        <dbReference type="ChEBI" id="CHEBI:190135"/>
    </ligand>
</feature>
<feature type="binding site" evidence="1">
    <location>
        <position position="230"/>
    </location>
    <ligand>
        <name>[2Fe-2S] cluster</name>
        <dbReference type="ChEBI" id="CHEBI:190135"/>
    </ligand>
</feature>
<feature type="binding site" evidence="1">
    <location>
        <position position="276"/>
    </location>
    <ligand>
        <name>[4Fe-4S] cluster</name>
        <dbReference type="ChEBI" id="CHEBI:49883"/>
    </ligand>
</feature>
<feature type="binding site" evidence="1">
    <location>
        <position position="279"/>
    </location>
    <ligand>
        <name>[4Fe-4S] cluster</name>
        <dbReference type="ChEBI" id="CHEBI:49883"/>
    </ligand>
</feature>
<feature type="binding site" evidence="1">
    <location>
        <position position="287"/>
    </location>
    <ligand>
        <name>[4Fe-4S] cluster</name>
        <dbReference type="ChEBI" id="CHEBI:49883"/>
    </ligand>
</feature>
<feature type="binding site" evidence="1">
    <location>
        <position position="290"/>
    </location>
    <ligand>
        <name>[4Fe-4S] cluster</name>
        <dbReference type="ChEBI" id="CHEBI:49883"/>
    </ligand>
</feature>
<dbReference type="EMBL" id="BA000053">
    <property type="protein sequence ID" value="BAE63163.1"/>
    <property type="molecule type" value="Genomic_DNA"/>
</dbReference>
<dbReference type="RefSeq" id="XP_001824296.1">
    <property type="nucleotide sequence ID" value="XM_001824244.2"/>
</dbReference>
<dbReference type="IntAct" id="Q2U5K2">
    <property type="interactions" value="1"/>
</dbReference>
<dbReference type="MINT" id="Q2U5K2"/>
<dbReference type="STRING" id="510516.Q2U5K2"/>
<dbReference type="EnsemblFungi" id="BAE63163">
    <property type="protein sequence ID" value="BAE63163"/>
    <property type="gene ID" value="AO090113000110"/>
</dbReference>
<dbReference type="GeneID" id="5995943"/>
<dbReference type="KEGG" id="aor:AO090113000110"/>
<dbReference type="VEuPathDB" id="FungiDB:AO090113000110"/>
<dbReference type="HOGENOM" id="CLU_067152_1_0_1"/>
<dbReference type="OMA" id="DFVMPVT"/>
<dbReference type="OrthoDB" id="117523at5052"/>
<dbReference type="Proteomes" id="UP000006564">
    <property type="component" value="Chromosome 5"/>
</dbReference>
<dbReference type="GO" id="GO:0005758">
    <property type="term" value="C:mitochondrial intermembrane space"/>
    <property type="evidence" value="ECO:0007669"/>
    <property type="project" value="UniProtKB-SubCell"/>
</dbReference>
<dbReference type="GO" id="GO:0051537">
    <property type="term" value="F:2 iron, 2 sulfur cluster binding"/>
    <property type="evidence" value="ECO:0007669"/>
    <property type="project" value="UniProtKB-UniRule"/>
</dbReference>
<dbReference type="GO" id="GO:0051539">
    <property type="term" value="F:4 iron, 4 sulfur cluster binding"/>
    <property type="evidence" value="ECO:0007669"/>
    <property type="project" value="UniProtKB-KW"/>
</dbReference>
<dbReference type="GO" id="GO:0009055">
    <property type="term" value="F:electron transfer activity"/>
    <property type="evidence" value="ECO:0007669"/>
    <property type="project" value="UniProtKB-UniRule"/>
</dbReference>
<dbReference type="GO" id="GO:0046872">
    <property type="term" value="F:metal ion binding"/>
    <property type="evidence" value="ECO:0007669"/>
    <property type="project" value="UniProtKB-KW"/>
</dbReference>
<dbReference type="GO" id="GO:0016226">
    <property type="term" value="P:iron-sulfur cluster assembly"/>
    <property type="evidence" value="ECO:0007669"/>
    <property type="project" value="UniProtKB-UniRule"/>
</dbReference>
<dbReference type="Gene3D" id="3.40.50.11000">
    <property type="entry name" value="Fe-S cluster assembly protein Dre2, N-terminal domain"/>
    <property type="match status" value="1"/>
</dbReference>
<dbReference type="HAMAP" id="MF_03115">
    <property type="entry name" value="Anamorsin"/>
    <property type="match status" value="1"/>
</dbReference>
<dbReference type="InterPro" id="IPR007785">
    <property type="entry name" value="Anamorsin"/>
</dbReference>
<dbReference type="InterPro" id="IPR046408">
    <property type="entry name" value="CIAPIN1"/>
</dbReference>
<dbReference type="InterPro" id="IPR031838">
    <property type="entry name" value="Dre2_N"/>
</dbReference>
<dbReference type="PANTHER" id="PTHR13273">
    <property type="entry name" value="ANAMORSIN"/>
    <property type="match status" value="1"/>
</dbReference>
<dbReference type="PANTHER" id="PTHR13273:SF14">
    <property type="entry name" value="ANAMORSIN"/>
    <property type="match status" value="1"/>
</dbReference>
<dbReference type="Pfam" id="PF05093">
    <property type="entry name" value="CIAPIN1"/>
    <property type="match status" value="1"/>
</dbReference>
<dbReference type="Pfam" id="PF16803">
    <property type="entry name" value="DRE2_N"/>
    <property type="match status" value="1"/>
</dbReference>
<proteinExistence type="inferred from homology"/>
<evidence type="ECO:0000255" key="1">
    <source>
        <dbReference type="HAMAP-Rule" id="MF_03115"/>
    </source>
</evidence>
<evidence type="ECO:0000256" key="2">
    <source>
        <dbReference type="SAM" id="MobiDB-lite"/>
    </source>
</evidence>
<protein>
    <recommendedName>
        <fullName evidence="1">Fe-S cluster assembly protein dre2</fullName>
    </recommendedName>
    <alternativeName>
        <fullName evidence="1">Anamorsin homolog</fullName>
    </alternativeName>
</protein>
<keyword id="KW-0001">2Fe-2S</keyword>
<keyword id="KW-0004">4Fe-4S</keyword>
<keyword id="KW-0963">Cytoplasm</keyword>
<keyword id="KW-0408">Iron</keyword>
<keyword id="KW-0411">Iron-sulfur</keyword>
<keyword id="KW-0479">Metal-binding</keyword>
<keyword id="KW-0496">Mitochondrion</keyword>
<keyword id="KW-1185">Reference proteome</keyword>
<sequence length="313" mass="33795">MSITIDTSVDIDLPTPPQSNGSQKRNLLLAPPSVAAHEEKLRDVFSTFDRSSTDLQMFDRLSAGFVSLPPNTYDLVLVLTDAQSDEAVRLLTRDVYTALVPAMKAGARLQLQQGSLGASEGLEAILAGLVEKDGGFEKPVQEAAVPLKLGGRKKKDKTNGVNGVQNGVATNGASTNGVGMFDPAQNNDDELIDEDALLSDDDLKRPLPRPQNCVPETAKKRRRPCKDCTCGLASQLEEEDRAREAKAAQDLNILKLNTDDLNDELDFTVQGKTSSCNSCSLGDAFRCSSCPYIGLPPFKPGEEVKIMNDMVQL</sequence>
<reference key="1">
    <citation type="journal article" date="2005" name="Nature">
        <title>Genome sequencing and analysis of Aspergillus oryzae.</title>
        <authorList>
            <person name="Machida M."/>
            <person name="Asai K."/>
            <person name="Sano M."/>
            <person name="Tanaka T."/>
            <person name="Kumagai T."/>
            <person name="Terai G."/>
            <person name="Kusumoto K."/>
            <person name="Arima T."/>
            <person name="Akita O."/>
            <person name="Kashiwagi Y."/>
            <person name="Abe K."/>
            <person name="Gomi K."/>
            <person name="Horiuchi H."/>
            <person name="Kitamoto K."/>
            <person name="Kobayashi T."/>
            <person name="Takeuchi M."/>
            <person name="Denning D.W."/>
            <person name="Galagan J.E."/>
            <person name="Nierman W.C."/>
            <person name="Yu J."/>
            <person name="Archer D.B."/>
            <person name="Bennett J.W."/>
            <person name="Bhatnagar D."/>
            <person name="Cleveland T.E."/>
            <person name="Fedorova N.D."/>
            <person name="Gotoh O."/>
            <person name="Horikawa H."/>
            <person name="Hosoyama A."/>
            <person name="Ichinomiya M."/>
            <person name="Igarashi R."/>
            <person name="Iwashita K."/>
            <person name="Juvvadi P.R."/>
            <person name="Kato M."/>
            <person name="Kato Y."/>
            <person name="Kin T."/>
            <person name="Kokubun A."/>
            <person name="Maeda H."/>
            <person name="Maeyama N."/>
            <person name="Maruyama J."/>
            <person name="Nagasaki H."/>
            <person name="Nakajima T."/>
            <person name="Oda K."/>
            <person name="Okada K."/>
            <person name="Paulsen I."/>
            <person name="Sakamoto K."/>
            <person name="Sawano T."/>
            <person name="Takahashi M."/>
            <person name="Takase K."/>
            <person name="Terabayashi Y."/>
            <person name="Wortman J.R."/>
            <person name="Yamada O."/>
            <person name="Yamagata Y."/>
            <person name="Anazawa H."/>
            <person name="Hata Y."/>
            <person name="Koide Y."/>
            <person name="Komori T."/>
            <person name="Koyama Y."/>
            <person name="Minetoki T."/>
            <person name="Suharnan S."/>
            <person name="Tanaka A."/>
            <person name="Isono K."/>
            <person name="Kuhara S."/>
            <person name="Ogasawara N."/>
            <person name="Kikuchi H."/>
        </authorList>
    </citation>
    <scope>NUCLEOTIDE SEQUENCE [LARGE SCALE GENOMIC DNA]</scope>
    <source>
        <strain>ATCC 42149 / RIB 40</strain>
    </source>
</reference>
<gene>
    <name evidence="1" type="primary">dre2</name>
    <name type="ORF">AO090113000110</name>
</gene>
<comment type="function">
    <text evidence="1">Component of the cytosolic iron-sulfur (Fe-S) protein assembly (CIA) machinery required for the maturation of extramitochondrial Fe-S proteins. Part of an electron transfer chain functioning in an early step of cytosolic Fe-S biogenesis, facilitating the de novo assembly of a [4Fe-4S] cluster on the scaffold complex cfd1-nbp35. Electrons are transferred to dre2 from NADPH via the FAD- and FMN-containing protein tah18. Tah18-dre2 are also required for the assembly of the diferric tyrosyl radical cofactor of ribonucleotide reductase (RNR), probably by providing electrons for reduction during radical cofactor maturation in the catalytic small subunit rnr2.</text>
</comment>
<comment type="cofactor">
    <cofactor evidence="1">
        <name>[2Fe-2S] cluster</name>
        <dbReference type="ChEBI" id="CHEBI:190135"/>
    </cofactor>
</comment>
<comment type="cofactor">
    <cofactor evidence="1">
        <name>[4Fe-4S] cluster</name>
        <dbReference type="ChEBI" id="CHEBI:49883"/>
    </cofactor>
</comment>
<comment type="subunit">
    <text evidence="1">Monomer. Interacts with tah18. Interacts with mia40.</text>
</comment>
<comment type="subcellular location">
    <subcellularLocation>
        <location evidence="1">Cytoplasm</location>
    </subcellularLocation>
    <subcellularLocation>
        <location evidence="1">Mitochondrion intermembrane space</location>
    </subcellularLocation>
</comment>
<comment type="domain">
    <text evidence="1">The C-terminal domain binds 2 Fe-S clusters but is otherwise mostly in an intrinsically disordered conformation.</text>
</comment>
<comment type="domain">
    <text evidence="1">The N-terminal domain has structural similarity with S-adenosyl-L-methionine-dependent methyltransferases, but does not bind S-adenosyl-L-methionine. It is required for correct assembly of the 2 Fe-S clusters.</text>
</comment>
<comment type="domain">
    <text evidence="1">The twin Cx2C motifs are involved in the recognition by the mitochondrial mia40-erv1 disulfide relay system. The formation of 2 disulfide bonds in the Cx2C motifs through dithiol/disulfide exchange reactions effectively traps the protein in the mitochondrial intermembrane space.</text>
</comment>
<comment type="similarity">
    <text evidence="1">Belongs to the anamorsin family.</text>
</comment>
<accession>Q2U5K2</accession>
<name>DRE2_ASPOR</name>
<organism>
    <name type="scientific">Aspergillus oryzae (strain ATCC 42149 / RIB 40)</name>
    <name type="common">Yellow koji mold</name>
    <dbReference type="NCBI Taxonomy" id="510516"/>
    <lineage>
        <taxon>Eukaryota</taxon>
        <taxon>Fungi</taxon>
        <taxon>Dikarya</taxon>
        <taxon>Ascomycota</taxon>
        <taxon>Pezizomycotina</taxon>
        <taxon>Eurotiomycetes</taxon>
        <taxon>Eurotiomycetidae</taxon>
        <taxon>Eurotiales</taxon>
        <taxon>Aspergillaceae</taxon>
        <taxon>Aspergillus</taxon>
        <taxon>Aspergillus subgen. Circumdati</taxon>
    </lineage>
</organism>